<name>LPXD_RICBR</name>
<dbReference type="EC" id="2.3.1.191" evidence="1"/>
<dbReference type="EMBL" id="CP000087">
    <property type="protein sequence ID" value="ABE05270.1"/>
    <property type="molecule type" value="Genomic_DNA"/>
</dbReference>
<dbReference type="RefSeq" id="WP_011477848.1">
    <property type="nucleotide sequence ID" value="NC_007940.1"/>
</dbReference>
<dbReference type="SMR" id="Q1RH94"/>
<dbReference type="KEGG" id="rbe:RBE_1189"/>
<dbReference type="eggNOG" id="COG1044">
    <property type="taxonomic scope" value="Bacteria"/>
</dbReference>
<dbReference type="HOGENOM" id="CLU_049865_0_0_5"/>
<dbReference type="OrthoDB" id="9784739at2"/>
<dbReference type="UniPathway" id="UPA00973"/>
<dbReference type="Proteomes" id="UP000001951">
    <property type="component" value="Chromosome"/>
</dbReference>
<dbReference type="GO" id="GO:0016020">
    <property type="term" value="C:membrane"/>
    <property type="evidence" value="ECO:0007669"/>
    <property type="project" value="GOC"/>
</dbReference>
<dbReference type="GO" id="GO:0016410">
    <property type="term" value="F:N-acyltransferase activity"/>
    <property type="evidence" value="ECO:0007669"/>
    <property type="project" value="InterPro"/>
</dbReference>
<dbReference type="GO" id="GO:0009245">
    <property type="term" value="P:lipid A biosynthetic process"/>
    <property type="evidence" value="ECO:0007669"/>
    <property type="project" value="UniProtKB-UniRule"/>
</dbReference>
<dbReference type="CDD" id="cd03352">
    <property type="entry name" value="LbH_LpxD"/>
    <property type="match status" value="1"/>
</dbReference>
<dbReference type="Gene3D" id="2.160.10.10">
    <property type="entry name" value="Hexapeptide repeat proteins"/>
    <property type="match status" value="1"/>
</dbReference>
<dbReference type="Gene3D" id="3.40.1390.10">
    <property type="entry name" value="MurE/MurF, N-terminal domain"/>
    <property type="match status" value="1"/>
</dbReference>
<dbReference type="HAMAP" id="MF_00523">
    <property type="entry name" value="LpxD"/>
    <property type="match status" value="1"/>
</dbReference>
<dbReference type="InterPro" id="IPR001451">
    <property type="entry name" value="Hexapep"/>
</dbReference>
<dbReference type="InterPro" id="IPR007691">
    <property type="entry name" value="LpxD"/>
</dbReference>
<dbReference type="InterPro" id="IPR011004">
    <property type="entry name" value="Trimer_LpxA-like_sf"/>
</dbReference>
<dbReference type="InterPro" id="IPR020573">
    <property type="entry name" value="UDP_GlcNAc_AcTrfase_non-rep"/>
</dbReference>
<dbReference type="NCBIfam" id="TIGR01853">
    <property type="entry name" value="lipid_A_lpxD"/>
    <property type="match status" value="1"/>
</dbReference>
<dbReference type="NCBIfam" id="NF002060">
    <property type="entry name" value="PRK00892.1"/>
    <property type="match status" value="1"/>
</dbReference>
<dbReference type="PANTHER" id="PTHR43378">
    <property type="entry name" value="UDP-3-O-ACYLGLUCOSAMINE N-ACYLTRANSFERASE"/>
    <property type="match status" value="1"/>
</dbReference>
<dbReference type="PANTHER" id="PTHR43378:SF2">
    <property type="entry name" value="UDP-3-O-ACYLGLUCOSAMINE N-ACYLTRANSFERASE 1, MITOCHONDRIAL-RELATED"/>
    <property type="match status" value="1"/>
</dbReference>
<dbReference type="Pfam" id="PF00132">
    <property type="entry name" value="Hexapep"/>
    <property type="match status" value="2"/>
</dbReference>
<dbReference type="Pfam" id="PF04613">
    <property type="entry name" value="LpxD"/>
    <property type="match status" value="1"/>
</dbReference>
<dbReference type="SUPFAM" id="SSF51161">
    <property type="entry name" value="Trimeric LpxA-like enzymes"/>
    <property type="match status" value="1"/>
</dbReference>
<dbReference type="PROSITE" id="PS00101">
    <property type="entry name" value="HEXAPEP_TRANSFERASES"/>
    <property type="match status" value="2"/>
</dbReference>
<feature type="chain" id="PRO_0000264429" description="UDP-3-O-acylglucosamine N-acyltransferase">
    <location>
        <begin position="1"/>
        <end position="342"/>
    </location>
</feature>
<feature type="active site" description="Proton acceptor" evidence="1">
    <location>
        <position position="253"/>
    </location>
</feature>
<protein>
    <recommendedName>
        <fullName evidence="1">UDP-3-O-acylglucosamine N-acyltransferase</fullName>
        <ecNumber evidence="1">2.3.1.191</ecNumber>
    </recommendedName>
</protein>
<sequence length="342" mass="36599">MVNSNFYRNLGPRKLMAIADFLQDFIEAPKIHEDVAIHDIKILQEASSNDISFLSNIKYSRFLKNTKAAACIVPKDFTGEVNPNTVLLRAENSYFAYGKLIDFFYAPVKSYPAKIMKSAYVAESATIGKNCYVGHNAVIEDNVVIGDDSIIEAGSFIGTGVVIGRNARIESNVSINYSVIGDDVVILSGAKIGQDGFGFSTEKGMHHKIFHTGIVKIGNNVEIGANTTIDRGSLQDTIIEDLCRIDNLVQIGHSVKIGKGSIIVAQAGIAGSSVIGKYCALGGQVGVAGHLYIGDGAQVAAQGGVAQNIEAGKIVGGSPAVPIMDWHRQSIIMKQLINKRSK</sequence>
<reference key="1">
    <citation type="journal article" date="2006" name="PLoS Genet.">
        <title>Genome sequence of Rickettsia bellii illuminates the role of amoebae in gene exchanges between intracellular pathogens.</title>
        <authorList>
            <person name="Ogata H."/>
            <person name="La Scola B."/>
            <person name="Audic S."/>
            <person name="Renesto P."/>
            <person name="Blanc G."/>
            <person name="Robert C."/>
            <person name="Fournier P.-E."/>
            <person name="Claverie J.-M."/>
            <person name="Raoult D."/>
        </authorList>
    </citation>
    <scope>NUCLEOTIDE SEQUENCE [LARGE SCALE GENOMIC DNA]</scope>
    <source>
        <strain>RML369-C</strain>
    </source>
</reference>
<comment type="function">
    <text evidence="1">Catalyzes the N-acylation of UDP-3-O-acylglucosamine using 3-hydroxyacyl-ACP as the acyl donor. Is involved in the biosynthesis of lipid A, a phosphorylated glycolipid that anchors the lipopolysaccharide to the outer membrane of the cell.</text>
</comment>
<comment type="catalytic activity">
    <reaction evidence="1">
        <text>a UDP-3-O-[(3R)-3-hydroxyacyl]-alpha-D-glucosamine + a (3R)-hydroxyacyl-[ACP] = a UDP-2-N,3-O-bis[(3R)-3-hydroxyacyl]-alpha-D-glucosamine + holo-[ACP] + H(+)</text>
        <dbReference type="Rhea" id="RHEA:53836"/>
        <dbReference type="Rhea" id="RHEA-COMP:9685"/>
        <dbReference type="Rhea" id="RHEA-COMP:9945"/>
        <dbReference type="ChEBI" id="CHEBI:15378"/>
        <dbReference type="ChEBI" id="CHEBI:64479"/>
        <dbReference type="ChEBI" id="CHEBI:78827"/>
        <dbReference type="ChEBI" id="CHEBI:137740"/>
        <dbReference type="ChEBI" id="CHEBI:137748"/>
        <dbReference type="EC" id="2.3.1.191"/>
    </reaction>
</comment>
<comment type="pathway">
    <text evidence="1">Bacterial outer membrane biogenesis; LPS lipid A biosynthesis.</text>
</comment>
<comment type="subunit">
    <text evidence="1">Homotrimer.</text>
</comment>
<comment type="similarity">
    <text evidence="1">Belongs to the transferase hexapeptide repeat family. LpxD subfamily.</text>
</comment>
<accession>Q1RH94</accession>
<organism>
    <name type="scientific">Rickettsia bellii (strain RML369-C)</name>
    <dbReference type="NCBI Taxonomy" id="336407"/>
    <lineage>
        <taxon>Bacteria</taxon>
        <taxon>Pseudomonadati</taxon>
        <taxon>Pseudomonadota</taxon>
        <taxon>Alphaproteobacteria</taxon>
        <taxon>Rickettsiales</taxon>
        <taxon>Rickettsiaceae</taxon>
        <taxon>Rickettsieae</taxon>
        <taxon>Rickettsia</taxon>
        <taxon>belli group</taxon>
    </lineage>
</organism>
<gene>
    <name evidence="1" type="primary">lpxD</name>
    <name type="ordered locus">RBE_1189</name>
</gene>
<keyword id="KW-0012">Acyltransferase</keyword>
<keyword id="KW-0441">Lipid A biosynthesis</keyword>
<keyword id="KW-0444">Lipid biosynthesis</keyword>
<keyword id="KW-0443">Lipid metabolism</keyword>
<keyword id="KW-0677">Repeat</keyword>
<keyword id="KW-0808">Transferase</keyword>
<proteinExistence type="inferred from homology"/>
<evidence type="ECO:0000255" key="1">
    <source>
        <dbReference type="HAMAP-Rule" id="MF_00523"/>
    </source>
</evidence>